<feature type="chain" id="PRO_0000198433" description="Ribonuclease P protein component">
    <location>
        <begin position="1"/>
        <end position="141"/>
    </location>
</feature>
<feature type="region of interest" description="Disordered" evidence="2">
    <location>
        <begin position="37"/>
        <end position="56"/>
    </location>
</feature>
<feature type="region of interest" description="Disordered" evidence="2">
    <location>
        <begin position="114"/>
        <end position="141"/>
    </location>
</feature>
<feature type="compositionally biased region" description="Basic and acidic residues" evidence="2">
    <location>
        <begin position="114"/>
        <end position="124"/>
    </location>
</feature>
<proteinExistence type="inferred from homology"/>
<organism>
    <name type="scientific">Brucella melitensis biotype 1 (strain ATCC 23456 / CCUG 17765 / NCTC 10094 / 16M)</name>
    <dbReference type="NCBI Taxonomy" id="224914"/>
    <lineage>
        <taxon>Bacteria</taxon>
        <taxon>Pseudomonadati</taxon>
        <taxon>Pseudomonadota</taxon>
        <taxon>Alphaproteobacteria</taxon>
        <taxon>Hyphomicrobiales</taxon>
        <taxon>Brucellaceae</taxon>
        <taxon>Brucella/Ochrobactrum group</taxon>
        <taxon>Brucella</taxon>
    </lineage>
</organism>
<comment type="function">
    <text evidence="1">RNaseP catalyzes the removal of the 5'-leader sequence from pre-tRNA to produce the mature 5'-terminus. It can also cleave other RNA substrates such as 4.5S RNA. The protein component plays an auxiliary but essential role in vivo by binding to the 5'-leader sequence and broadening the substrate specificity of the ribozyme.</text>
</comment>
<comment type="catalytic activity">
    <reaction evidence="1">
        <text>Endonucleolytic cleavage of RNA, removing 5'-extranucleotides from tRNA precursor.</text>
        <dbReference type="EC" id="3.1.26.5"/>
    </reaction>
</comment>
<comment type="subunit">
    <text evidence="1">Consists of a catalytic RNA component (M1 or rnpB) and a protein subunit.</text>
</comment>
<comment type="similarity">
    <text evidence="1">Belongs to the RnpA family.</text>
</comment>
<gene>
    <name evidence="1" type="primary">rnpA</name>
    <name type="ordered locus">BMEII0276</name>
</gene>
<accession>Q8YDA2</accession>
<evidence type="ECO:0000255" key="1">
    <source>
        <dbReference type="HAMAP-Rule" id="MF_00227"/>
    </source>
</evidence>
<evidence type="ECO:0000256" key="2">
    <source>
        <dbReference type="SAM" id="MobiDB-lite"/>
    </source>
</evidence>
<sequence length="141" mass="16095">MKSKKQILRLRKRAEFLTVRNGEKRRGPLFLMAVRERTEEESNAAKTGDNPRVGFTVTKKNGNAVIRNRIRRRLKEAIRCHAGRDMAPSTDYVIVAREQALNAPFSQLTEELSRRITAKGERRSGGKRRTERPEPGPVNGK</sequence>
<name>RNPA_BRUME</name>
<reference key="1">
    <citation type="journal article" date="2002" name="Proc. Natl. Acad. Sci. U.S.A.">
        <title>The genome sequence of the facultative intracellular pathogen Brucella melitensis.</title>
        <authorList>
            <person name="DelVecchio V.G."/>
            <person name="Kapatral V."/>
            <person name="Redkar R.J."/>
            <person name="Patra G."/>
            <person name="Mujer C."/>
            <person name="Los T."/>
            <person name="Ivanova N."/>
            <person name="Anderson I."/>
            <person name="Bhattacharyya A."/>
            <person name="Lykidis A."/>
            <person name="Reznik G."/>
            <person name="Jablonski L."/>
            <person name="Larsen N."/>
            <person name="D'Souza M."/>
            <person name="Bernal A."/>
            <person name="Mazur M."/>
            <person name="Goltsman E."/>
            <person name="Selkov E."/>
            <person name="Elzer P.H."/>
            <person name="Hagius S."/>
            <person name="O'Callaghan D."/>
            <person name="Letesson J.-J."/>
            <person name="Haselkorn R."/>
            <person name="Kyrpides N.C."/>
            <person name="Overbeek R."/>
        </authorList>
    </citation>
    <scope>NUCLEOTIDE SEQUENCE [LARGE SCALE GENOMIC DNA]</scope>
    <source>
        <strain>ATCC 23456 / CCUG 17765 / NCTC 10094 / 16M</strain>
    </source>
</reference>
<protein>
    <recommendedName>
        <fullName evidence="1">Ribonuclease P protein component</fullName>
        <shortName evidence="1">RNase P protein</shortName>
        <shortName evidence="1">RNaseP protein</shortName>
        <ecNumber evidence="1">3.1.26.5</ecNumber>
    </recommendedName>
    <alternativeName>
        <fullName evidence="1">Protein C5</fullName>
    </alternativeName>
</protein>
<keyword id="KW-0255">Endonuclease</keyword>
<keyword id="KW-0378">Hydrolase</keyword>
<keyword id="KW-0540">Nuclease</keyword>
<keyword id="KW-0694">RNA-binding</keyword>
<keyword id="KW-0819">tRNA processing</keyword>
<dbReference type="EC" id="3.1.26.5" evidence="1"/>
<dbReference type="EMBL" id="AE008918">
    <property type="protein sequence ID" value="AAL53517.1"/>
    <property type="molecule type" value="Genomic_DNA"/>
</dbReference>
<dbReference type="PIR" id="AB3544">
    <property type="entry name" value="AB3544"/>
</dbReference>
<dbReference type="SMR" id="Q8YDA2"/>
<dbReference type="KEGG" id="bme:BMEII0276"/>
<dbReference type="eggNOG" id="COG0594">
    <property type="taxonomic scope" value="Bacteria"/>
</dbReference>
<dbReference type="Proteomes" id="UP000000419">
    <property type="component" value="Chromosome II"/>
</dbReference>
<dbReference type="GO" id="GO:0030677">
    <property type="term" value="C:ribonuclease P complex"/>
    <property type="evidence" value="ECO:0007669"/>
    <property type="project" value="TreeGrafter"/>
</dbReference>
<dbReference type="GO" id="GO:0042781">
    <property type="term" value="F:3'-tRNA processing endoribonuclease activity"/>
    <property type="evidence" value="ECO:0007669"/>
    <property type="project" value="TreeGrafter"/>
</dbReference>
<dbReference type="GO" id="GO:0004526">
    <property type="term" value="F:ribonuclease P activity"/>
    <property type="evidence" value="ECO:0007669"/>
    <property type="project" value="UniProtKB-UniRule"/>
</dbReference>
<dbReference type="GO" id="GO:0000049">
    <property type="term" value="F:tRNA binding"/>
    <property type="evidence" value="ECO:0007669"/>
    <property type="project" value="UniProtKB-UniRule"/>
</dbReference>
<dbReference type="GO" id="GO:0001682">
    <property type="term" value="P:tRNA 5'-leader removal"/>
    <property type="evidence" value="ECO:0007669"/>
    <property type="project" value="UniProtKB-UniRule"/>
</dbReference>
<dbReference type="Gene3D" id="3.30.230.10">
    <property type="match status" value="1"/>
</dbReference>
<dbReference type="HAMAP" id="MF_00227">
    <property type="entry name" value="RNase_P"/>
    <property type="match status" value="1"/>
</dbReference>
<dbReference type="InterPro" id="IPR020568">
    <property type="entry name" value="Ribosomal_Su5_D2-typ_SF"/>
</dbReference>
<dbReference type="InterPro" id="IPR014721">
    <property type="entry name" value="Ribsml_uS5_D2-typ_fold_subgr"/>
</dbReference>
<dbReference type="InterPro" id="IPR000100">
    <property type="entry name" value="RNase_P"/>
</dbReference>
<dbReference type="InterPro" id="IPR020539">
    <property type="entry name" value="RNase_P_CS"/>
</dbReference>
<dbReference type="NCBIfam" id="TIGR00188">
    <property type="entry name" value="rnpA"/>
    <property type="match status" value="1"/>
</dbReference>
<dbReference type="PANTHER" id="PTHR33992">
    <property type="entry name" value="RIBONUCLEASE P PROTEIN COMPONENT"/>
    <property type="match status" value="1"/>
</dbReference>
<dbReference type="PANTHER" id="PTHR33992:SF1">
    <property type="entry name" value="RIBONUCLEASE P PROTEIN COMPONENT"/>
    <property type="match status" value="1"/>
</dbReference>
<dbReference type="Pfam" id="PF00825">
    <property type="entry name" value="Ribonuclease_P"/>
    <property type="match status" value="1"/>
</dbReference>
<dbReference type="SUPFAM" id="SSF54211">
    <property type="entry name" value="Ribosomal protein S5 domain 2-like"/>
    <property type="match status" value="1"/>
</dbReference>
<dbReference type="PROSITE" id="PS00648">
    <property type="entry name" value="RIBONUCLEASE_P"/>
    <property type="match status" value="1"/>
</dbReference>